<gene>
    <name type="primary">OR3A3</name>
</gene>
<accession>Q9TUA0</accession>
<comment type="function">
    <text evidence="3">Odorant receptor.</text>
</comment>
<comment type="subcellular location">
    <subcellularLocation>
        <location>Cell membrane</location>
        <topology>Multi-pass membrane protein</topology>
    </subcellularLocation>
</comment>
<comment type="similarity">
    <text evidence="2">Belongs to the G-protein coupled receptor 1 family.</text>
</comment>
<keyword id="KW-1003">Cell membrane</keyword>
<keyword id="KW-1015">Disulfide bond</keyword>
<keyword id="KW-0297">G-protein coupled receptor</keyword>
<keyword id="KW-0325">Glycoprotein</keyword>
<keyword id="KW-0472">Membrane</keyword>
<keyword id="KW-0552">Olfaction</keyword>
<keyword id="KW-0675">Receptor</keyword>
<keyword id="KW-1185">Reference proteome</keyword>
<keyword id="KW-0716">Sensory transduction</keyword>
<keyword id="KW-0807">Transducer</keyword>
<keyword id="KW-0812">Transmembrane</keyword>
<keyword id="KW-1133">Transmembrane helix</keyword>
<dbReference type="EMBL" id="AF101742">
    <property type="protein sequence ID" value="AAF03324.1"/>
    <property type="molecule type" value="Genomic_DNA"/>
</dbReference>
<dbReference type="SMR" id="Q9TUA0"/>
<dbReference type="FunCoup" id="Q9TUA0">
    <property type="interactions" value="324"/>
</dbReference>
<dbReference type="GlyCosmos" id="Q9TUA0">
    <property type="glycosylation" value="1 site, No reported glycans"/>
</dbReference>
<dbReference type="PaxDb" id="9598-ENSPTRP00000014615"/>
<dbReference type="eggNOG" id="ENOG502RU1B">
    <property type="taxonomic scope" value="Eukaryota"/>
</dbReference>
<dbReference type="InParanoid" id="Q9TUA0"/>
<dbReference type="Proteomes" id="UP000002277">
    <property type="component" value="Unplaced"/>
</dbReference>
<dbReference type="GO" id="GO:0005886">
    <property type="term" value="C:plasma membrane"/>
    <property type="evidence" value="ECO:0000318"/>
    <property type="project" value="GO_Central"/>
</dbReference>
<dbReference type="GO" id="GO:0004930">
    <property type="term" value="F:G protein-coupled receptor activity"/>
    <property type="evidence" value="ECO:0007669"/>
    <property type="project" value="UniProtKB-KW"/>
</dbReference>
<dbReference type="GO" id="GO:0004984">
    <property type="term" value="F:olfactory receptor activity"/>
    <property type="evidence" value="ECO:0000318"/>
    <property type="project" value="GO_Central"/>
</dbReference>
<dbReference type="GO" id="GO:0007165">
    <property type="term" value="P:signal transduction"/>
    <property type="evidence" value="ECO:0000318"/>
    <property type="project" value="GO_Central"/>
</dbReference>
<dbReference type="CDD" id="cd15233">
    <property type="entry name" value="7tmA_OR3A-like"/>
    <property type="match status" value="1"/>
</dbReference>
<dbReference type="FunFam" id="1.20.1070.10:FF:000010">
    <property type="entry name" value="Olfactory receptor"/>
    <property type="match status" value="1"/>
</dbReference>
<dbReference type="Gene3D" id="1.20.1070.10">
    <property type="entry name" value="Rhodopsin 7-helix transmembrane proteins"/>
    <property type="match status" value="1"/>
</dbReference>
<dbReference type="InterPro" id="IPR000276">
    <property type="entry name" value="GPCR_Rhodpsn"/>
</dbReference>
<dbReference type="InterPro" id="IPR017452">
    <property type="entry name" value="GPCR_Rhodpsn_7TM"/>
</dbReference>
<dbReference type="InterPro" id="IPR000725">
    <property type="entry name" value="Olfact_rcpt"/>
</dbReference>
<dbReference type="PANTHER" id="PTHR48001">
    <property type="entry name" value="OLFACTORY RECEPTOR"/>
    <property type="match status" value="1"/>
</dbReference>
<dbReference type="Pfam" id="PF13853">
    <property type="entry name" value="7tm_4"/>
    <property type="match status" value="1"/>
</dbReference>
<dbReference type="PRINTS" id="PR00237">
    <property type="entry name" value="GPCRRHODOPSN"/>
</dbReference>
<dbReference type="PRINTS" id="PR00245">
    <property type="entry name" value="OLFACTORYR"/>
</dbReference>
<dbReference type="SUPFAM" id="SSF81321">
    <property type="entry name" value="Family A G protein-coupled receptor-like"/>
    <property type="match status" value="1"/>
</dbReference>
<dbReference type="PROSITE" id="PS00237">
    <property type="entry name" value="G_PROTEIN_RECEP_F1_1"/>
    <property type="match status" value="1"/>
</dbReference>
<dbReference type="PROSITE" id="PS50262">
    <property type="entry name" value="G_PROTEIN_RECEP_F1_2"/>
    <property type="match status" value="1"/>
</dbReference>
<organism>
    <name type="scientific">Pan troglodytes</name>
    <name type="common">Chimpanzee</name>
    <dbReference type="NCBI Taxonomy" id="9598"/>
    <lineage>
        <taxon>Eukaryota</taxon>
        <taxon>Metazoa</taxon>
        <taxon>Chordata</taxon>
        <taxon>Craniata</taxon>
        <taxon>Vertebrata</taxon>
        <taxon>Euteleostomi</taxon>
        <taxon>Mammalia</taxon>
        <taxon>Eutheria</taxon>
        <taxon>Euarchontoglires</taxon>
        <taxon>Primates</taxon>
        <taxon>Haplorrhini</taxon>
        <taxon>Catarrhini</taxon>
        <taxon>Hominidae</taxon>
        <taxon>Pan</taxon>
    </lineage>
</organism>
<feature type="chain" id="PRO_0000150521" description="Olfactory receptor 3A3">
    <location>
        <begin position="1"/>
        <end position="315"/>
    </location>
</feature>
<feature type="topological domain" description="Extracellular" evidence="1">
    <location>
        <begin position="1"/>
        <end position="28"/>
    </location>
</feature>
<feature type="transmembrane region" description="Helical; Name=1" evidence="1">
    <location>
        <begin position="29"/>
        <end position="52"/>
    </location>
</feature>
<feature type="topological domain" description="Cytoplasmic" evidence="1">
    <location>
        <begin position="53"/>
        <end position="60"/>
    </location>
</feature>
<feature type="transmembrane region" description="Helical; Name=2" evidence="1">
    <location>
        <begin position="61"/>
        <end position="82"/>
    </location>
</feature>
<feature type="topological domain" description="Extracellular" evidence="1">
    <location>
        <begin position="83"/>
        <end position="103"/>
    </location>
</feature>
<feature type="transmembrane region" description="Helical; Name=3" evidence="1">
    <location>
        <begin position="104"/>
        <end position="123"/>
    </location>
</feature>
<feature type="topological domain" description="Cytoplasmic" evidence="1">
    <location>
        <begin position="124"/>
        <end position="143"/>
    </location>
</feature>
<feature type="transmembrane region" description="Helical; Name=4" evidence="1">
    <location>
        <begin position="144"/>
        <end position="161"/>
    </location>
</feature>
<feature type="topological domain" description="Extracellular" evidence="1">
    <location>
        <begin position="162"/>
        <end position="199"/>
    </location>
</feature>
<feature type="transmembrane region" description="Helical; Name=5" evidence="1">
    <location>
        <begin position="200"/>
        <end position="222"/>
    </location>
</feature>
<feature type="topological domain" description="Cytoplasmic" evidence="1">
    <location>
        <begin position="223"/>
        <end position="239"/>
    </location>
</feature>
<feature type="transmembrane region" description="Helical; Name=6" evidence="1">
    <location>
        <begin position="240"/>
        <end position="262"/>
    </location>
</feature>
<feature type="topological domain" description="Extracellular" evidence="1">
    <location>
        <begin position="263"/>
        <end position="275"/>
    </location>
</feature>
<feature type="transmembrane region" description="Helical; Name=7" evidence="1">
    <location>
        <begin position="276"/>
        <end position="295"/>
    </location>
</feature>
<feature type="topological domain" description="Cytoplasmic" evidence="1">
    <location>
        <begin position="296"/>
        <end position="315"/>
    </location>
</feature>
<feature type="glycosylation site" description="N-linked (GlcNAc...) asparagine" evidence="1">
    <location>
        <position position="8"/>
    </location>
</feature>
<feature type="disulfide bond" evidence="2">
    <location>
        <begin position="100"/>
        <end position="192"/>
    </location>
</feature>
<protein>
    <recommendedName>
        <fullName>Olfactory receptor 3A3</fullName>
    </recommendedName>
</protein>
<evidence type="ECO:0000255" key="1"/>
<evidence type="ECO:0000255" key="2">
    <source>
        <dbReference type="PROSITE-ProRule" id="PRU00521"/>
    </source>
</evidence>
<evidence type="ECO:0000305" key="3"/>
<reference key="1">
    <citation type="journal article" date="1999" name="Genomics">
        <title>Primate evolution of an olfactory receptor cluster: diversification by gene conversion and recent emergence of pseudogenes.</title>
        <authorList>
            <person name="Sharon D."/>
            <person name="Glusman G."/>
            <person name="Pilpel Y."/>
            <person name="Khen M."/>
            <person name="Gruetzner F."/>
            <person name="Haaf T."/>
            <person name="Lancet D."/>
        </authorList>
    </citation>
    <scope>NUCLEOTIDE SEQUENCE [GENOMIC DNA]</scope>
</reference>
<proteinExistence type="inferred from homology"/>
<name>OR3A3_PANTR</name>
<sequence>MESEAGTNRTAVAEFMLLGLVQTEEMQSVIFVLLLFAYLVTTGGNLSILAAILVEPKLHTPMYFFLGNLSVLDVGCITVTVPAMLGRLLSHKSTISYDACLSQLFFFHLLAGMDCFLLTAMAYDRFLAICRPLTYSTHMNQRVQRMLVAVSWTCAFTNALTHTIALTTLNFCGPSVINHFYCDLPQLFQLSCSSTQLNELLLFVAAAVMAVAPLVFISVSYAHVVAAVLQIHSAEGRKKAFSTCGSHLTVVGIFYGTGVFSYMRLGSVESSDKDKGVGVFMTVINPMLNPLIYSLRNTDVQGALCQLLVVKRSLT</sequence>